<gene>
    <name evidence="1" type="primary">minC</name>
    <name type="ordered locus">Arad_8856</name>
</gene>
<keyword id="KW-0131">Cell cycle</keyword>
<keyword id="KW-0132">Cell division</keyword>
<keyword id="KW-0717">Septation</keyword>
<organism>
    <name type="scientific">Rhizobium rhizogenes (strain K84 / ATCC BAA-868)</name>
    <name type="common">Agrobacterium radiobacter</name>
    <dbReference type="NCBI Taxonomy" id="311403"/>
    <lineage>
        <taxon>Bacteria</taxon>
        <taxon>Pseudomonadati</taxon>
        <taxon>Pseudomonadota</taxon>
        <taxon>Alphaproteobacteria</taxon>
        <taxon>Hyphomicrobiales</taxon>
        <taxon>Rhizobiaceae</taxon>
        <taxon>Rhizobium/Agrobacterium group</taxon>
        <taxon>Rhizobium</taxon>
    </lineage>
</organism>
<comment type="function">
    <text evidence="1">Cell division inhibitor that blocks the formation of polar Z ring septums. Rapidly oscillates between the poles of the cell to destabilize FtsZ filaments that have formed before they mature into polar Z rings. Prevents FtsZ polymerization.</text>
</comment>
<comment type="subunit">
    <text evidence="1">Interacts with MinD and FtsZ.</text>
</comment>
<comment type="similarity">
    <text evidence="1">Belongs to the MinC family.</text>
</comment>
<reference key="1">
    <citation type="journal article" date="2009" name="J. Bacteriol.">
        <title>Genome sequences of three Agrobacterium biovars help elucidate the evolution of multichromosome genomes in bacteria.</title>
        <authorList>
            <person name="Slater S.C."/>
            <person name="Goldman B.S."/>
            <person name="Goodner B."/>
            <person name="Setubal J.C."/>
            <person name="Farrand S.K."/>
            <person name="Nester E.W."/>
            <person name="Burr T.J."/>
            <person name="Banta L."/>
            <person name="Dickerman A.W."/>
            <person name="Paulsen I."/>
            <person name="Otten L."/>
            <person name="Suen G."/>
            <person name="Welch R."/>
            <person name="Almeida N.F."/>
            <person name="Arnold F."/>
            <person name="Burton O.T."/>
            <person name="Du Z."/>
            <person name="Ewing A."/>
            <person name="Godsy E."/>
            <person name="Heisel S."/>
            <person name="Houmiel K.L."/>
            <person name="Jhaveri J."/>
            <person name="Lu J."/>
            <person name="Miller N.M."/>
            <person name="Norton S."/>
            <person name="Chen Q."/>
            <person name="Phoolcharoen W."/>
            <person name="Ohlin V."/>
            <person name="Ondrusek D."/>
            <person name="Pride N."/>
            <person name="Stricklin S.L."/>
            <person name="Sun J."/>
            <person name="Wheeler C."/>
            <person name="Wilson L."/>
            <person name="Zhu H."/>
            <person name="Wood D.W."/>
        </authorList>
    </citation>
    <scope>NUCLEOTIDE SEQUENCE [LARGE SCALE GENOMIC DNA]</scope>
    <source>
        <strain>K84 / ATCC BAA-868</strain>
    </source>
</reference>
<feature type="chain" id="PRO_1000191226" description="Probable septum site-determining protein MinC">
    <location>
        <begin position="1"/>
        <end position="241"/>
    </location>
</feature>
<dbReference type="EMBL" id="CP000629">
    <property type="protein sequence ID" value="ACM30027.1"/>
    <property type="molecule type" value="Genomic_DNA"/>
</dbReference>
<dbReference type="RefSeq" id="WP_007691238.1">
    <property type="nucleotide sequence ID" value="NC_011983.1"/>
</dbReference>
<dbReference type="SMR" id="B9JJD5"/>
<dbReference type="STRING" id="311403.Arad_8856"/>
<dbReference type="GeneID" id="86852526"/>
<dbReference type="KEGG" id="ara:Arad_8856"/>
<dbReference type="eggNOG" id="COG0850">
    <property type="taxonomic scope" value="Bacteria"/>
</dbReference>
<dbReference type="HOGENOM" id="CLU_067812_1_0_5"/>
<dbReference type="Proteomes" id="UP000001600">
    <property type="component" value="Chromosome 2"/>
</dbReference>
<dbReference type="GO" id="GO:0000902">
    <property type="term" value="P:cell morphogenesis"/>
    <property type="evidence" value="ECO:0007669"/>
    <property type="project" value="InterPro"/>
</dbReference>
<dbReference type="GO" id="GO:0000917">
    <property type="term" value="P:division septum assembly"/>
    <property type="evidence" value="ECO:0007669"/>
    <property type="project" value="UniProtKB-KW"/>
</dbReference>
<dbReference type="GO" id="GO:1901891">
    <property type="term" value="P:regulation of cell septum assembly"/>
    <property type="evidence" value="ECO:0007669"/>
    <property type="project" value="InterPro"/>
</dbReference>
<dbReference type="Gene3D" id="2.160.20.70">
    <property type="match status" value="1"/>
</dbReference>
<dbReference type="Gene3D" id="3.30.70.260">
    <property type="match status" value="1"/>
</dbReference>
<dbReference type="HAMAP" id="MF_00267">
    <property type="entry name" value="MinC"/>
    <property type="match status" value="1"/>
</dbReference>
<dbReference type="InterPro" id="IPR016098">
    <property type="entry name" value="CAP/MinC_C"/>
</dbReference>
<dbReference type="InterPro" id="IPR013033">
    <property type="entry name" value="MinC"/>
</dbReference>
<dbReference type="InterPro" id="IPR036145">
    <property type="entry name" value="MinC_C_sf"/>
</dbReference>
<dbReference type="InterPro" id="IPR005526">
    <property type="entry name" value="Septum_form_inhib_MinC_C"/>
</dbReference>
<dbReference type="NCBIfam" id="TIGR01222">
    <property type="entry name" value="minC"/>
    <property type="match status" value="1"/>
</dbReference>
<dbReference type="PANTHER" id="PTHR34108">
    <property type="entry name" value="SEPTUM SITE-DETERMINING PROTEIN MINC"/>
    <property type="match status" value="1"/>
</dbReference>
<dbReference type="PANTHER" id="PTHR34108:SF1">
    <property type="entry name" value="SEPTUM SITE-DETERMINING PROTEIN MINC"/>
    <property type="match status" value="1"/>
</dbReference>
<dbReference type="Pfam" id="PF03775">
    <property type="entry name" value="MinC_C"/>
    <property type="match status" value="1"/>
</dbReference>
<dbReference type="SUPFAM" id="SSF63848">
    <property type="entry name" value="Cell-division inhibitor MinC, C-terminal domain"/>
    <property type="match status" value="1"/>
</dbReference>
<sequence>MTKVITDPRSIRIKGRSFLAVMLSPDLPFDNWLIRLDDLAARSAGFFLGRPVVLDVTDLPIDRSQLKELIAELGQRNVSIMGIEGARPSILGPGMPAALKGGRAVSDFEVPEKEPTIELRSQPATVPEARPSVQSITIREPVRSGQSVIFPEGDVTVVGSVASGAEIVAGGSIHIYGTLRGRAMAGSLGKASAHIFCRKLEAELVAIDGIYKMAEDMPANLRGQAVQLWLEGDAIKAEKLI</sequence>
<protein>
    <recommendedName>
        <fullName evidence="1">Probable septum site-determining protein MinC</fullName>
    </recommendedName>
</protein>
<proteinExistence type="inferred from homology"/>
<accession>B9JJD5</accession>
<evidence type="ECO:0000255" key="1">
    <source>
        <dbReference type="HAMAP-Rule" id="MF_00267"/>
    </source>
</evidence>
<name>MINC_RHIR8</name>